<sequence length="196" mass="22294">MTKVHPKFPSTCEESLCDSKAAVVLTVWKKSLLFNCDGFTVYNANGELVFRVDNYMNCPRDNIVLMDASGFPLLSIRRKKLSLGDCWMVYDGETERDPIFTARKNVSIISNRKSLAWVSAKKTVLYEIEGSYGQRSCKILDERRNKKKTAEIKRKETVIGGVAFGKDVYKLIVESEMEPRVAMALTIILDQMFRSS</sequence>
<dbReference type="EMBL" id="AC005499">
    <property type="protein sequence ID" value="AAC67354.1"/>
    <property type="molecule type" value="Genomic_DNA"/>
</dbReference>
<dbReference type="EMBL" id="CP002685">
    <property type="protein sequence ID" value="AEC09560.1"/>
    <property type="molecule type" value="Genomic_DNA"/>
</dbReference>
<dbReference type="EMBL" id="BT021918">
    <property type="protein sequence ID" value="AAX49367.1"/>
    <property type="molecule type" value="mRNA"/>
</dbReference>
<dbReference type="EMBL" id="AK226738">
    <property type="protein sequence ID" value="BAE98840.1"/>
    <property type="molecule type" value="mRNA"/>
</dbReference>
<dbReference type="PIR" id="E84807">
    <property type="entry name" value="E84807"/>
</dbReference>
<dbReference type="RefSeq" id="NP_181398.1">
    <property type="nucleotide sequence ID" value="NM_129421.4"/>
</dbReference>
<dbReference type="SMR" id="Q9ZVI6"/>
<dbReference type="FunCoup" id="Q9ZVI6">
    <property type="interactions" value="2"/>
</dbReference>
<dbReference type="PaxDb" id="3702-AT2G38640.1"/>
<dbReference type="DNASU" id="818446"/>
<dbReference type="EnsemblPlants" id="AT2G38640.1">
    <property type="protein sequence ID" value="AT2G38640.1"/>
    <property type="gene ID" value="AT2G38640"/>
</dbReference>
<dbReference type="GeneID" id="818446"/>
<dbReference type="Gramene" id="AT2G38640.1">
    <property type="protein sequence ID" value="AT2G38640.1"/>
    <property type="gene ID" value="AT2G38640"/>
</dbReference>
<dbReference type="KEGG" id="ath:AT2G38640"/>
<dbReference type="Araport" id="AT2G38640"/>
<dbReference type="TAIR" id="AT2G38640"/>
<dbReference type="eggNOG" id="ENOG502RXRU">
    <property type="taxonomic scope" value="Eukaryota"/>
</dbReference>
<dbReference type="HOGENOM" id="CLU_063146_3_1_1"/>
<dbReference type="InParanoid" id="Q9ZVI6"/>
<dbReference type="OMA" id="NPRFCVR"/>
<dbReference type="OrthoDB" id="748129at2759"/>
<dbReference type="PhylomeDB" id="Q9ZVI6"/>
<dbReference type="PRO" id="PR:Q9ZVI6"/>
<dbReference type="Proteomes" id="UP000006548">
    <property type="component" value="Chromosome 2"/>
</dbReference>
<dbReference type="ExpressionAtlas" id="Q9ZVI6">
    <property type="expression patterns" value="baseline and differential"/>
</dbReference>
<dbReference type="Gene3D" id="2.40.160.200">
    <property type="entry name" value="LURP1-related"/>
    <property type="match status" value="1"/>
</dbReference>
<dbReference type="InterPro" id="IPR007612">
    <property type="entry name" value="LOR"/>
</dbReference>
<dbReference type="InterPro" id="IPR038595">
    <property type="entry name" value="LOR_sf"/>
</dbReference>
<dbReference type="InterPro" id="IPR025659">
    <property type="entry name" value="Tubby-like_C"/>
</dbReference>
<dbReference type="PANTHER" id="PTHR31087">
    <property type="match status" value="1"/>
</dbReference>
<dbReference type="PANTHER" id="PTHR31087:SF22">
    <property type="entry name" value="PROTEIN LURP-ONE-RELATED 8"/>
    <property type="match status" value="1"/>
</dbReference>
<dbReference type="Pfam" id="PF04525">
    <property type="entry name" value="LOR"/>
    <property type="match status" value="1"/>
</dbReference>
<dbReference type="SUPFAM" id="SSF54518">
    <property type="entry name" value="Tubby C-terminal domain-like"/>
    <property type="match status" value="1"/>
</dbReference>
<comment type="function">
    <text evidence="1">Might be related to the phospholipid scramblase and tubby-like superfamily of membrane tethered transcription factors.</text>
</comment>
<comment type="similarity">
    <text evidence="2">Belongs to the LOR family.</text>
</comment>
<reference key="1">
    <citation type="journal article" date="1999" name="Nature">
        <title>Sequence and analysis of chromosome 2 of the plant Arabidopsis thaliana.</title>
        <authorList>
            <person name="Lin X."/>
            <person name="Kaul S."/>
            <person name="Rounsley S.D."/>
            <person name="Shea T.P."/>
            <person name="Benito M.-I."/>
            <person name="Town C.D."/>
            <person name="Fujii C.Y."/>
            <person name="Mason T.M."/>
            <person name="Bowman C.L."/>
            <person name="Barnstead M.E."/>
            <person name="Feldblyum T.V."/>
            <person name="Buell C.R."/>
            <person name="Ketchum K.A."/>
            <person name="Lee J.J."/>
            <person name="Ronning C.M."/>
            <person name="Koo H.L."/>
            <person name="Moffat K.S."/>
            <person name="Cronin L.A."/>
            <person name="Shen M."/>
            <person name="Pai G."/>
            <person name="Van Aken S."/>
            <person name="Umayam L."/>
            <person name="Tallon L.J."/>
            <person name="Gill J.E."/>
            <person name="Adams M.D."/>
            <person name="Carrera A.J."/>
            <person name="Creasy T.H."/>
            <person name="Goodman H.M."/>
            <person name="Somerville C.R."/>
            <person name="Copenhaver G.P."/>
            <person name="Preuss D."/>
            <person name="Nierman W.C."/>
            <person name="White O."/>
            <person name="Eisen J.A."/>
            <person name="Salzberg S.L."/>
            <person name="Fraser C.M."/>
            <person name="Venter J.C."/>
        </authorList>
    </citation>
    <scope>NUCLEOTIDE SEQUENCE [LARGE SCALE GENOMIC DNA]</scope>
    <source>
        <strain>cv. Columbia</strain>
    </source>
</reference>
<reference key="2">
    <citation type="journal article" date="2017" name="Plant J.">
        <title>Araport11: a complete reannotation of the Arabidopsis thaliana reference genome.</title>
        <authorList>
            <person name="Cheng C.Y."/>
            <person name="Krishnakumar V."/>
            <person name="Chan A.P."/>
            <person name="Thibaud-Nissen F."/>
            <person name="Schobel S."/>
            <person name="Town C.D."/>
        </authorList>
    </citation>
    <scope>GENOME REANNOTATION</scope>
    <source>
        <strain>cv. Columbia</strain>
    </source>
</reference>
<reference key="3">
    <citation type="submission" date="2005-03" db="EMBL/GenBank/DDBJ databases">
        <title>Arabidopsis cDNA clones.</title>
        <authorList>
            <person name="Shinn P."/>
            <person name="Chen H."/>
            <person name="Cheuk R."/>
            <person name="Kim C.J."/>
            <person name="Ecker J.R."/>
        </authorList>
    </citation>
    <scope>NUCLEOTIDE SEQUENCE [LARGE SCALE MRNA]</scope>
    <source>
        <strain>cv. Columbia</strain>
    </source>
</reference>
<reference key="4">
    <citation type="submission" date="2006-07" db="EMBL/GenBank/DDBJ databases">
        <title>Large-scale analysis of RIKEN Arabidopsis full-length (RAFL) cDNAs.</title>
        <authorList>
            <person name="Totoki Y."/>
            <person name="Seki M."/>
            <person name="Ishida J."/>
            <person name="Nakajima M."/>
            <person name="Enju A."/>
            <person name="Kamiya A."/>
            <person name="Narusaka M."/>
            <person name="Shin-i T."/>
            <person name="Nakagawa M."/>
            <person name="Sakamoto N."/>
            <person name="Oishi K."/>
            <person name="Kohara Y."/>
            <person name="Kobayashi M."/>
            <person name="Toyoda A."/>
            <person name="Sakaki Y."/>
            <person name="Sakurai T."/>
            <person name="Iida K."/>
            <person name="Akiyama K."/>
            <person name="Satou M."/>
            <person name="Toyoda T."/>
            <person name="Konagaya A."/>
            <person name="Carninci P."/>
            <person name="Kawai J."/>
            <person name="Hayashizaki Y."/>
            <person name="Shinozaki K."/>
        </authorList>
    </citation>
    <scope>NUCLEOTIDE SEQUENCE [LARGE SCALE MRNA]</scope>
    <source>
        <strain>cv. Columbia</strain>
    </source>
</reference>
<proteinExistence type="evidence at transcript level"/>
<feature type="chain" id="PRO_0000399240" description="Protein LURP-one-related 8">
    <location>
        <begin position="1"/>
        <end position="196"/>
    </location>
</feature>
<name>LOR8_ARATH</name>
<protein>
    <recommendedName>
        <fullName>Protein LURP-one-related 8</fullName>
    </recommendedName>
</protein>
<keyword id="KW-1185">Reference proteome</keyword>
<accession>Q9ZVI6</accession>
<gene>
    <name type="ordered locus">At2g38640</name>
    <name type="ORF">T6A23.16</name>
</gene>
<organism>
    <name type="scientific">Arabidopsis thaliana</name>
    <name type="common">Mouse-ear cress</name>
    <dbReference type="NCBI Taxonomy" id="3702"/>
    <lineage>
        <taxon>Eukaryota</taxon>
        <taxon>Viridiplantae</taxon>
        <taxon>Streptophyta</taxon>
        <taxon>Embryophyta</taxon>
        <taxon>Tracheophyta</taxon>
        <taxon>Spermatophyta</taxon>
        <taxon>Magnoliopsida</taxon>
        <taxon>eudicotyledons</taxon>
        <taxon>Gunneridae</taxon>
        <taxon>Pentapetalae</taxon>
        <taxon>rosids</taxon>
        <taxon>malvids</taxon>
        <taxon>Brassicales</taxon>
        <taxon>Brassicaceae</taxon>
        <taxon>Camelineae</taxon>
        <taxon>Arabidopsis</taxon>
    </lineage>
</organism>
<evidence type="ECO:0000250" key="1"/>
<evidence type="ECO:0000305" key="2"/>